<proteinExistence type="inferred from homology"/>
<feature type="chain" id="PRO_1000022428" description="Phenylalanine--tRNA ligase beta subunit">
    <location>
        <begin position="1"/>
        <end position="554"/>
    </location>
</feature>
<feature type="domain" description="B5" evidence="1">
    <location>
        <begin position="276"/>
        <end position="351"/>
    </location>
</feature>
<feature type="binding site" evidence="1">
    <location>
        <position position="329"/>
    </location>
    <ligand>
        <name>Mg(2+)</name>
        <dbReference type="ChEBI" id="CHEBI:18420"/>
        <note>shared with alpha subunit</note>
    </ligand>
</feature>
<feature type="binding site" evidence="1">
    <location>
        <position position="335"/>
    </location>
    <ligand>
        <name>Mg(2+)</name>
        <dbReference type="ChEBI" id="CHEBI:18420"/>
        <note>shared with alpha subunit</note>
    </ligand>
</feature>
<feature type="binding site" evidence="1">
    <location>
        <position position="338"/>
    </location>
    <ligand>
        <name>Mg(2+)</name>
        <dbReference type="ChEBI" id="CHEBI:18420"/>
        <note>shared with alpha subunit</note>
    </ligand>
</feature>
<feature type="binding site" evidence="1">
    <location>
        <position position="339"/>
    </location>
    <ligand>
        <name>Mg(2+)</name>
        <dbReference type="ChEBI" id="CHEBI:18420"/>
        <note>shared with alpha subunit</note>
    </ligand>
</feature>
<name>SYFB_METVS</name>
<accession>A6UPQ4</accession>
<organism>
    <name type="scientific">Methanococcus vannielii (strain ATCC 35089 / DSM 1224 / JCM 13029 / OCM 148 / SB)</name>
    <dbReference type="NCBI Taxonomy" id="406327"/>
    <lineage>
        <taxon>Archaea</taxon>
        <taxon>Methanobacteriati</taxon>
        <taxon>Methanobacteriota</taxon>
        <taxon>Methanomada group</taxon>
        <taxon>Methanococci</taxon>
        <taxon>Methanococcales</taxon>
        <taxon>Methanococcaceae</taxon>
        <taxon>Methanococcus</taxon>
    </lineage>
</organism>
<gene>
    <name evidence="1" type="primary">pheT</name>
    <name type="ordered locus">Mevan_0569</name>
</gene>
<sequence>MPTINVNKVDLERLCNLVLSDKLIEDKFPMMGVEVEEIFEEIDKSGKKQKIIQFSINPDRPDYLSVEGLARGFRGFMGINTGFQQFDVYESDTNVTVLDNESRPYIAFALVKNVQMDEMVLESIINLQEKLHWALGRDRKKLAIGVHDFDMVKGPFTYKEIKGDEIKFAPLGYDSEEMTPKEILEKHEKGQKYGKLIKDGKFPIIVDSKNNVLSMPPIINGTLTKVTKNSKNLLIDITGTEKEAVEEALNIFVCSLFERSGTIYSVNVNGKRYPDLTPRYREISIDLINKKLGLELNAGEIISALKKARMDVKFENEKLMVKIPAYRNDILHNVDLKEEVAKNHGYEKFEGKLPSIATTGSRNPIEKKCKHYQNTMLGFGFFEVMNLTLSNQETLFEKMNLKYSEKDYVEVLKPASIEHRVLRTSILPMLLETLFINKHNVLPQKIFEIGDCVLIDENDTKTDTKCKNIKKISCAVVHPLTNFNEIKTVTEGLLRETFGEFEIENYEHPSFISGRCAKILNNGKEIGFFGEIHPEVILNFELEHPIVAFEILIE</sequence>
<dbReference type="EC" id="6.1.1.20" evidence="1"/>
<dbReference type="EMBL" id="CP000742">
    <property type="protein sequence ID" value="ABR54476.1"/>
    <property type="molecule type" value="Genomic_DNA"/>
</dbReference>
<dbReference type="RefSeq" id="WP_011972379.1">
    <property type="nucleotide sequence ID" value="NC_009634.1"/>
</dbReference>
<dbReference type="SMR" id="A6UPQ4"/>
<dbReference type="STRING" id="406327.Mevan_0569"/>
<dbReference type="GeneID" id="5326016"/>
<dbReference type="KEGG" id="mvn:Mevan_0569"/>
<dbReference type="eggNOG" id="arCOG00412">
    <property type="taxonomic scope" value="Archaea"/>
</dbReference>
<dbReference type="HOGENOM" id="CLU_020279_3_0_2"/>
<dbReference type="OrthoDB" id="10073at2157"/>
<dbReference type="Proteomes" id="UP000001107">
    <property type="component" value="Chromosome"/>
</dbReference>
<dbReference type="GO" id="GO:0009328">
    <property type="term" value="C:phenylalanine-tRNA ligase complex"/>
    <property type="evidence" value="ECO:0007669"/>
    <property type="project" value="TreeGrafter"/>
</dbReference>
<dbReference type="GO" id="GO:0005524">
    <property type="term" value="F:ATP binding"/>
    <property type="evidence" value="ECO:0007669"/>
    <property type="project" value="UniProtKB-UniRule"/>
</dbReference>
<dbReference type="GO" id="GO:0000287">
    <property type="term" value="F:magnesium ion binding"/>
    <property type="evidence" value="ECO:0007669"/>
    <property type="project" value="InterPro"/>
</dbReference>
<dbReference type="GO" id="GO:0004826">
    <property type="term" value="F:phenylalanine-tRNA ligase activity"/>
    <property type="evidence" value="ECO:0007669"/>
    <property type="project" value="UniProtKB-UniRule"/>
</dbReference>
<dbReference type="GO" id="GO:0003723">
    <property type="term" value="F:RNA binding"/>
    <property type="evidence" value="ECO:0007669"/>
    <property type="project" value="InterPro"/>
</dbReference>
<dbReference type="GO" id="GO:0006432">
    <property type="term" value="P:phenylalanyl-tRNA aminoacylation"/>
    <property type="evidence" value="ECO:0007669"/>
    <property type="project" value="UniProtKB-UniRule"/>
</dbReference>
<dbReference type="CDD" id="cd00769">
    <property type="entry name" value="PheRS_beta_core"/>
    <property type="match status" value="1"/>
</dbReference>
<dbReference type="FunFam" id="3.50.40.10:FF:000003">
    <property type="entry name" value="Phenylalanine--tRNA ligase beta subunit"/>
    <property type="match status" value="1"/>
</dbReference>
<dbReference type="Gene3D" id="3.30.56.10">
    <property type="match status" value="2"/>
</dbReference>
<dbReference type="Gene3D" id="3.30.930.10">
    <property type="entry name" value="Bira Bifunctional Protein, Domain 2"/>
    <property type="match status" value="1"/>
</dbReference>
<dbReference type="Gene3D" id="3.50.40.10">
    <property type="entry name" value="Phenylalanyl-trna Synthetase, Chain B, domain 3"/>
    <property type="match status" value="1"/>
</dbReference>
<dbReference type="HAMAP" id="MF_00284">
    <property type="entry name" value="Phe_tRNA_synth_beta2"/>
    <property type="match status" value="1"/>
</dbReference>
<dbReference type="InterPro" id="IPR045864">
    <property type="entry name" value="aa-tRNA-synth_II/BPL/LPL"/>
</dbReference>
<dbReference type="InterPro" id="IPR005146">
    <property type="entry name" value="B3/B4_tRNA-bd"/>
</dbReference>
<dbReference type="InterPro" id="IPR009061">
    <property type="entry name" value="DNA-bd_dom_put_sf"/>
</dbReference>
<dbReference type="InterPro" id="IPR045060">
    <property type="entry name" value="Phe-tRNA-ligase_IIc_bsu"/>
</dbReference>
<dbReference type="InterPro" id="IPR004531">
    <property type="entry name" value="Phe-tRNA-synth_IIc_bsu_arc_euk"/>
</dbReference>
<dbReference type="InterPro" id="IPR020825">
    <property type="entry name" value="Phe-tRNA_synthase-like_B3/B4"/>
</dbReference>
<dbReference type="InterPro" id="IPR022918">
    <property type="entry name" value="Phe_tRNA_ligase_beta2_arc"/>
</dbReference>
<dbReference type="InterPro" id="IPR041616">
    <property type="entry name" value="PheRS_beta_core"/>
</dbReference>
<dbReference type="InterPro" id="IPR040659">
    <property type="entry name" value="PhetRS_B1"/>
</dbReference>
<dbReference type="InterPro" id="IPR005147">
    <property type="entry name" value="tRNA_synthase_B5-dom"/>
</dbReference>
<dbReference type="NCBIfam" id="TIGR00471">
    <property type="entry name" value="pheT_arch"/>
    <property type="match status" value="1"/>
</dbReference>
<dbReference type="PANTHER" id="PTHR10947:SF0">
    <property type="entry name" value="PHENYLALANINE--TRNA LIGASE BETA SUBUNIT"/>
    <property type="match status" value="1"/>
</dbReference>
<dbReference type="PANTHER" id="PTHR10947">
    <property type="entry name" value="PHENYLALANYL-TRNA SYNTHETASE BETA CHAIN AND LEUCINE-RICH REPEAT-CONTAINING PROTEIN 47"/>
    <property type="match status" value="1"/>
</dbReference>
<dbReference type="Pfam" id="PF03483">
    <property type="entry name" value="B3_4"/>
    <property type="match status" value="1"/>
</dbReference>
<dbReference type="Pfam" id="PF03484">
    <property type="entry name" value="B5"/>
    <property type="match status" value="1"/>
</dbReference>
<dbReference type="Pfam" id="PF18262">
    <property type="entry name" value="PhetRS_B1"/>
    <property type="match status" value="1"/>
</dbReference>
<dbReference type="Pfam" id="PF17759">
    <property type="entry name" value="tRNA_synthFbeta"/>
    <property type="match status" value="1"/>
</dbReference>
<dbReference type="SMART" id="SM00873">
    <property type="entry name" value="B3_4"/>
    <property type="match status" value="1"/>
</dbReference>
<dbReference type="SMART" id="SM00874">
    <property type="entry name" value="B5"/>
    <property type="match status" value="1"/>
</dbReference>
<dbReference type="SUPFAM" id="SSF55681">
    <property type="entry name" value="Class II aaRS and biotin synthetases"/>
    <property type="match status" value="1"/>
</dbReference>
<dbReference type="SUPFAM" id="SSF46955">
    <property type="entry name" value="Putative DNA-binding domain"/>
    <property type="match status" value="2"/>
</dbReference>
<dbReference type="PROSITE" id="PS51483">
    <property type="entry name" value="B5"/>
    <property type="match status" value="1"/>
</dbReference>
<reference key="1">
    <citation type="submission" date="2007-06" db="EMBL/GenBank/DDBJ databases">
        <title>Complete sequence of Methanococcus vannielii SB.</title>
        <authorList>
            <consortium name="US DOE Joint Genome Institute"/>
            <person name="Copeland A."/>
            <person name="Lucas S."/>
            <person name="Lapidus A."/>
            <person name="Barry K."/>
            <person name="Glavina del Rio T."/>
            <person name="Dalin E."/>
            <person name="Tice H."/>
            <person name="Pitluck S."/>
            <person name="Chain P."/>
            <person name="Malfatti S."/>
            <person name="Shin M."/>
            <person name="Vergez L."/>
            <person name="Schmutz J."/>
            <person name="Larimer F."/>
            <person name="Land M."/>
            <person name="Hauser L."/>
            <person name="Kyrpides N."/>
            <person name="Anderson I."/>
            <person name="Sieprawska-Lupa M."/>
            <person name="Whitman W.B."/>
            <person name="Richardson P."/>
        </authorList>
    </citation>
    <scope>NUCLEOTIDE SEQUENCE [LARGE SCALE GENOMIC DNA]</scope>
    <source>
        <strain>ATCC 35089 / DSM 1224 / JCM 13029 / OCM 148 / SB</strain>
    </source>
</reference>
<comment type="catalytic activity">
    <reaction evidence="1">
        <text>tRNA(Phe) + L-phenylalanine + ATP = L-phenylalanyl-tRNA(Phe) + AMP + diphosphate + H(+)</text>
        <dbReference type="Rhea" id="RHEA:19413"/>
        <dbReference type="Rhea" id="RHEA-COMP:9668"/>
        <dbReference type="Rhea" id="RHEA-COMP:9699"/>
        <dbReference type="ChEBI" id="CHEBI:15378"/>
        <dbReference type="ChEBI" id="CHEBI:30616"/>
        <dbReference type="ChEBI" id="CHEBI:33019"/>
        <dbReference type="ChEBI" id="CHEBI:58095"/>
        <dbReference type="ChEBI" id="CHEBI:78442"/>
        <dbReference type="ChEBI" id="CHEBI:78531"/>
        <dbReference type="ChEBI" id="CHEBI:456215"/>
        <dbReference type="EC" id="6.1.1.20"/>
    </reaction>
</comment>
<comment type="cofactor">
    <cofactor evidence="1">
        <name>Mg(2+)</name>
        <dbReference type="ChEBI" id="CHEBI:18420"/>
    </cofactor>
</comment>
<comment type="subunit">
    <text evidence="1">Tetramer of two alpha and two beta subunits.</text>
</comment>
<comment type="subcellular location">
    <subcellularLocation>
        <location evidence="1">Cytoplasm</location>
    </subcellularLocation>
</comment>
<comment type="similarity">
    <text evidence="1">Belongs to the phenylalanyl-tRNA synthetase beta subunit family. Type 2 subfamily.</text>
</comment>
<evidence type="ECO:0000255" key="1">
    <source>
        <dbReference type="HAMAP-Rule" id="MF_00284"/>
    </source>
</evidence>
<keyword id="KW-0030">Aminoacyl-tRNA synthetase</keyword>
<keyword id="KW-0067">ATP-binding</keyword>
<keyword id="KW-0963">Cytoplasm</keyword>
<keyword id="KW-0436">Ligase</keyword>
<keyword id="KW-0460">Magnesium</keyword>
<keyword id="KW-0479">Metal-binding</keyword>
<keyword id="KW-0547">Nucleotide-binding</keyword>
<keyword id="KW-0648">Protein biosynthesis</keyword>
<protein>
    <recommendedName>
        <fullName evidence="1">Phenylalanine--tRNA ligase beta subunit</fullName>
        <ecNumber evidence="1">6.1.1.20</ecNumber>
    </recommendedName>
    <alternativeName>
        <fullName evidence="1">Phenylalanyl-tRNA synthetase beta subunit</fullName>
        <shortName evidence="1">PheRS</shortName>
    </alternativeName>
</protein>